<keyword id="KW-0997">Cell inner membrane</keyword>
<keyword id="KW-1003">Cell membrane</keyword>
<keyword id="KW-0472">Membrane</keyword>
<keyword id="KW-0653">Protein transport</keyword>
<keyword id="KW-0811">Translocation</keyword>
<keyword id="KW-0812">Transmembrane</keyword>
<keyword id="KW-1133">Transmembrane helix</keyword>
<keyword id="KW-0813">Transport</keyword>
<evidence type="ECO:0000255" key="1">
    <source>
        <dbReference type="HAMAP-Rule" id="MF_00236"/>
    </source>
</evidence>
<evidence type="ECO:0000256" key="2">
    <source>
        <dbReference type="SAM" id="MobiDB-lite"/>
    </source>
</evidence>
<accession>A9KYL5</accession>
<gene>
    <name evidence="1" type="primary">tatA</name>
    <name type="ordered locus">Sbal195_0428</name>
</gene>
<protein>
    <recommendedName>
        <fullName evidence="1">Sec-independent protein translocase protein TatA</fullName>
    </recommendedName>
</protein>
<proteinExistence type="inferred from homology"/>
<feature type="chain" id="PRO_1000078319" description="Sec-independent protein translocase protein TatA">
    <location>
        <begin position="1"/>
        <end position="79"/>
    </location>
</feature>
<feature type="transmembrane region" description="Helical" evidence="1">
    <location>
        <begin position="1"/>
        <end position="21"/>
    </location>
</feature>
<feature type="region of interest" description="Disordered" evidence="2">
    <location>
        <begin position="43"/>
        <end position="79"/>
    </location>
</feature>
<feature type="compositionally biased region" description="Basic and acidic residues" evidence="2">
    <location>
        <begin position="46"/>
        <end position="57"/>
    </location>
</feature>
<feature type="compositionally biased region" description="Low complexity" evidence="2">
    <location>
        <begin position="58"/>
        <end position="67"/>
    </location>
</feature>
<feature type="compositionally biased region" description="Basic and acidic residues" evidence="2">
    <location>
        <begin position="68"/>
        <end position="79"/>
    </location>
</feature>
<sequence length="79" mass="8420">MGGISIWQLLIVALIVVLLFGTKKLRSLGGDLGGAVKGFKNAMSSEEDKKALEDTEAAKTAQTTQQATEKKPESNKEQA</sequence>
<reference key="1">
    <citation type="submission" date="2007-11" db="EMBL/GenBank/DDBJ databases">
        <title>Complete sequence of chromosome of Shewanella baltica OS195.</title>
        <authorList>
            <consortium name="US DOE Joint Genome Institute"/>
            <person name="Copeland A."/>
            <person name="Lucas S."/>
            <person name="Lapidus A."/>
            <person name="Barry K."/>
            <person name="Glavina del Rio T."/>
            <person name="Dalin E."/>
            <person name="Tice H."/>
            <person name="Pitluck S."/>
            <person name="Chain P."/>
            <person name="Malfatti S."/>
            <person name="Shin M."/>
            <person name="Vergez L."/>
            <person name="Schmutz J."/>
            <person name="Larimer F."/>
            <person name="Land M."/>
            <person name="Hauser L."/>
            <person name="Kyrpides N."/>
            <person name="Kim E."/>
            <person name="Brettar I."/>
            <person name="Rodrigues J."/>
            <person name="Konstantinidis K."/>
            <person name="Klappenbach J."/>
            <person name="Hofle M."/>
            <person name="Tiedje J."/>
            <person name="Richardson P."/>
        </authorList>
    </citation>
    <scope>NUCLEOTIDE SEQUENCE [LARGE SCALE GENOMIC DNA]</scope>
    <source>
        <strain>OS195</strain>
    </source>
</reference>
<name>TATA_SHEB9</name>
<dbReference type="EMBL" id="CP000891">
    <property type="protein sequence ID" value="ABX47609.1"/>
    <property type="molecule type" value="Genomic_DNA"/>
</dbReference>
<dbReference type="RefSeq" id="WP_006083329.1">
    <property type="nucleotide sequence ID" value="NC_009997.1"/>
</dbReference>
<dbReference type="SMR" id="A9KYL5"/>
<dbReference type="GeneID" id="11770767"/>
<dbReference type="KEGG" id="sbn:Sbal195_0428"/>
<dbReference type="HOGENOM" id="CLU_086034_5_1_6"/>
<dbReference type="Proteomes" id="UP000000770">
    <property type="component" value="Chromosome"/>
</dbReference>
<dbReference type="GO" id="GO:0033281">
    <property type="term" value="C:TAT protein transport complex"/>
    <property type="evidence" value="ECO:0007669"/>
    <property type="project" value="UniProtKB-UniRule"/>
</dbReference>
<dbReference type="GO" id="GO:0008320">
    <property type="term" value="F:protein transmembrane transporter activity"/>
    <property type="evidence" value="ECO:0007669"/>
    <property type="project" value="UniProtKB-UniRule"/>
</dbReference>
<dbReference type="GO" id="GO:0043953">
    <property type="term" value="P:protein transport by the Tat complex"/>
    <property type="evidence" value="ECO:0007669"/>
    <property type="project" value="UniProtKB-UniRule"/>
</dbReference>
<dbReference type="Gene3D" id="1.20.5.3310">
    <property type="match status" value="1"/>
</dbReference>
<dbReference type="HAMAP" id="MF_00236">
    <property type="entry name" value="TatA_E"/>
    <property type="match status" value="1"/>
</dbReference>
<dbReference type="InterPro" id="IPR003369">
    <property type="entry name" value="TatA/B/E"/>
</dbReference>
<dbReference type="InterPro" id="IPR006312">
    <property type="entry name" value="TatA/E"/>
</dbReference>
<dbReference type="NCBIfam" id="NF002813">
    <property type="entry name" value="PRK02958.1"/>
    <property type="match status" value="1"/>
</dbReference>
<dbReference type="NCBIfam" id="TIGR01411">
    <property type="entry name" value="tatAE"/>
    <property type="match status" value="1"/>
</dbReference>
<dbReference type="PANTHER" id="PTHR42982">
    <property type="entry name" value="SEC-INDEPENDENT PROTEIN TRANSLOCASE PROTEIN TATA"/>
    <property type="match status" value="1"/>
</dbReference>
<dbReference type="PANTHER" id="PTHR42982:SF1">
    <property type="entry name" value="SEC-INDEPENDENT PROTEIN TRANSLOCASE PROTEIN TATA"/>
    <property type="match status" value="1"/>
</dbReference>
<dbReference type="Pfam" id="PF02416">
    <property type="entry name" value="TatA_B_E"/>
    <property type="match status" value="1"/>
</dbReference>
<organism>
    <name type="scientific">Shewanella baltica (strain OS195)</name>
    <dbReference type="NCBI Taxonomy" id="399599"/>
    <lineage>
        <taxon>Bacteria</taxon>
        <taxon>Pseudomonadati</taxon>
        <taxon>Pseudomonadota</taxon>
        <taxon>Gammaproteobacteria</taxon>
        <taxon>Alteromonadales</taxon>
        <taxon>Shewanellaceae</taxon>
        <taxon>Shewanella</taxon>
    </lineage>
</organism>
<comment type="function">
    <text evidence="1">Part of the twin-arginine translocation (Tat) system that transports large folded proteins containing a characteristic twin-arginine motif in their signal peptide across membranes. TatA could form the protein-conducting channel of the Tat system.</text>
</comment>
<comment type="subunit">
    <text evidence="1">The Tat system comprises two distinct complexes: a TatABC complex, containing multiple copies of TatA, TatB and TatC subunits, and a separate TatA complex, containing only TatA subunits. Substrates initially bind to the TatABC complex, which probably triggers association of the separate TatA complex to form the active translocon.</text>
</comment>
<comment type="subcellular location">
    <subcellularLocation>
        <location evidence="1">Cell inner membrane</location>
        <topology evidence="1">Single-pass membrane protein</topology>
    </subcellularLocation>
</comment>
<comment type="similarity">
    <text evidence="1">Belongs to the TatA/E family.</text>
</comment>